<sequence length="219" mass="25571">MGDSSSSTSWSSKKDTEDDRMIAFMLSEEYSKLDGAVGRRLSNLAPVPHVPRINCYIPNLNDATLDHQRLLQRLNVYGLCELKVSGDGNCQFRALSDQLYRSPEYHKQVRREVVKQLKECRSMYESYVPMKYKRYYKKMGKFGEWGDHITLQAAADRFAAKICLLTSFRDTCFIEIIPQYQAPKGVLWLSFWSEVHYNSLYDIQAAPVQHKPKRKHWLF</sequence>
<gene>
    <name evidence="5" type="primary">OTU12</name>
    <name evidence="8" type="ordered locus">At3g02070</name>
    <name evidence="9" type="ORF">F1C9.14</name>
</gene>
<comment type="function">
    <text evidence="4 7">Hydrolase that can remove conjugated ubiquitin from proteins in vitro and may therefore play an important regulatory role at the level of protein turnover by preventing degradation (Probable). Inactive cysteine protease (PubMed:24659992).</text>
</comment>
<comment type="catalytic activity">
    <reaction evidence="1">
        <text>Thiol-dependent hydrolysis of ester, thioester, amide, peptide and isopeptide bonds formed by the C-terminal Gly of ubiquitin (a 76-residue protein attached to proteins as an intracellular targeting signal).</text>
        <dbReference type="EC" id="3.4.19.12"/>
    </reaction>
</comment>
<comment type="alternative products">
    <event type="alternative splicing"/>
    <isoform>
        <id>Q9SGA5-1</id>
        <name>1</name>
        <sequence type="displayed"/>
    </isoform>
    <isoform>
        <id>Q9SGA5-2</id>
        <name>2</name>
        <sequence type="described" ref="VSP_060268 VSP_060269"/>
    </isoform>
</comment>
<comment type="similarity">
    <text evidence="6">Belongs to the peptidase C85 family.</text>
</comment>
<feature type="chain" id="PRO_0000447762" description="OVARIAN TUMOR DOMAIN-containing deubiquitinating enzyme 12">
    <location>
        <begin position="1"/>
        <end position="219"/>
    </location>
</feature>
<feature type="domain" description="OTU" evidence="3">
    <location>
        <begin position="79"/>
        <end position="203"/>
    </location>
</feature>
<feature type="active site" evidence="2">
    <location>
        <position position="87"/>
    </location>
</feature>
<feature type="active site" description="Nucleophile" evidence="1">
    <location>
        <position position="90"/>
    </location>
</feature>
<feature type="active site" evidence="1">
    <location>
        <position position="196"/>
    </location>
</feature>
<feature type="splice variant" id="VSP_060268" description="In isoform 2.">
    <original>FRALSD</original>
    <variation>VNGGYI</variation>
    <location>
        <begin position="92"/>
        <end position="97"/>
    </location>
</feature>
<feature type="splice variant" id="VSP_060269" description="In isoform 2.">
    <location>
        <begin position="98"/>
        <end position="219"/>
    </location>
</feature>
<protein>
    <recommendedName>
        <fullName evidence="5">OVARIAN TUMOR DOMAIN-containing deubiquitinating enzyme 12</fullName>
        <shortName evidence="5">OTU domain-containing protein 12</shortName>
        <ecNumber evidence="1">3.4.19.12</ecNumber>
    </recommendedName>
    <alternativeName>
        <fullName evidence="5">Deubiquitinating enzyme OTU12</fullName>
    </alternativeName>
</protein>
<organism>
    <name type="scientific">Arabidopsis thaliana</name>
    <name type="common">Mouse-ear cress</name>
    <dbReference type="NCBI Taxonomy" id="3702"/>
    <lineage>
        <taxon>Eukaryota</taxon>
        <taxon>Viridiplantae</taxon>
        <taxon>Streptophyta</taxon>
        <taxon>Embryophyta</taxon>
        <taxon>Tracheophyta</taxon>
        <taxon>Spermatophyta</taxon>
        <taxon>Magnoliopsida</taxon>
        <taxon>eudicotyledons</taxon>
        <taxon>Gunneridae</taxon>
        <taxon>Pentapetalae</taxon>
        <taxon>rosids</taxon>
        <taxon>malvids</taxon>
        <taxon>Brassicales</taxon>
        <taxon>Brassicaceae</taxon>
        <taxon>Camelineae</taxon>
        <taxon>Arabidopsis</taxon>
    </lineage>
</organism>
<evidence type="ECO:0000250" key="1">
    <source>
        <dbReference type="UniProtKB" id="Q96G74"/>
    </source>
</evidence>
<evidence type="ECO:0000255" key="2"/>
<evidence type="ECO:0000255" key="3">
    <source>
        <dbReference type="PROSITE-ProRule" id="PRU00139"/>
    </source>
</evidence>
<evidence type="ECO:0000269" key="4">
    <source>
    </source>
</evidence>
<evidence type="ECO:0000303" key="5">
    <source>
    </source>
</evidence>
<evidence type="ECO:0000305" key="6"/>
<evidence type="ECO:0000305" key="7">
    <source>
    </source>
</evidence>
<evidence type="ECO:0000312" key="8">
    <source>
        <dbReference type="Araport" id="AT3G02070"/>
    </source>
</evidence>
<evidence type="ECO:0000312" key="9">
    <source>
        <dbReference type="EMBL" id="AAF14829.1"/>
    </source>
</evidence>
<accession>Q9SGA5</accession>
<accession>A0A178VFU2</accession>
<accession>Q0WTB0</accession>
<dbReference type="EC" id="3.4.19.12" evidence="1"/>
<dbReference type="EMBL" id="JQ013459">
    <property type="protein sequence ID" value="AFS88961.1"/>
    <property type="molecule type" value="mRNA"/>
</dbReference>
<dbReference type="EMBL" id="AC011664">
    <property type="protein sequence ID" value="AAF14829.1"/>
    <property type="molecule type" value="Genomic_DNA"/>
</dbReference>
<dbReference type="EMBL" id="CP002686">
    <property type="protein sequence ID" value="AEE73759.1"/>
    <property type="molecule type" value="Genomic_DNA"/>
</dbReference>
<dbReference type="EMBL" id="CP002686">
    <property type="protein sequence ID" value="ANM65420.1"/>
    <property type="molecule type" value="Genomic_DNA"/>
</dbReference>
<dbReference type="EMBL" id="BT012213">
    <property type="protein sequence ID" value="AAS76700.1"/>
    <property type="molecule type" value="mRNA"/>
</dbReference>
<dbReference type="EMBL" id="BT012408">
    <property type="protein sequence ID" value="AAS92324.1"/>
    <property type="molecule type" value="mRNA"/>
</dbReference>
<dbReference type="EMBL" id="AK227651">
    <property type="protein sequence ID" value="BAE99638.1"/>
    <property type="molecule type" value="mRNA"/>
</dbReference>
<dbReference type="EMBL" id="AK317486">
    <property type="protein sequence ID" value="BAH20151.1"/>
    <property type="molecule type" value="mRNA"/>
</dbReference>
<dbReference type="RefSeq" id="NP_001319447.1">
    <molecule id="Q9SGA5-1"/>
    <property type="nucleotide sequence ID" value="NM_001337380.1"/>
</dbReference>
<dbReference type="RefSeq" id="NP_186856.1">
    <molecule id="Q9SGA5-1"/>
    <property type="nucleotide sequence ID" value="NM_111073.4"/>
</dbReference>
<dbReference type="SMR" id="Q9SGA5"/>
<dbReference type="FunCoup" id="Q9SGA5">
    <property type="interactions" value="66"/>
</dbReference>
<dbReference type="STRING" id="3702.Q9SGA5"/>
<dbReference type="MEROPS" id="C85.A02"/>
<dbReference type="PaxDb" id="3702-AT3G02070.1"/>
<dbReference type="ProteomicsDB" id="177414">
    <molecule id="Q9SGA5-1"/>
</dbReference>
<dbReference type="DNASU" id="821202"/>
<dbReference type="EnsemblPlants" id="AT3G02070.1">
    <molecule id="Q9SGA5-1"/>
    <property type="protein sequence ID" value="AT3G02070.1"/>
    <property type="gene ID" value="AT3G02070"/>
</dbReference>
<dbReference type="EnsemblPlants" id="AT3G02070.2">
    <molecule id="Q9SGA5-1"/>
    <property type="protein sequence ID" value="AT3G02070.2"/>
    <property type="gene ID" value="AT3G02070"/>
</dbReference>
<dbReference type="GeneID" id="821202"/>
<dbReference type="Gramene" id="AT3G02070.1">
    <molecule id="Q9SGA5-1"/>
    <property type="protein sequence ID" value="AT3G02070.1"/>
    <property type="gene ID" value="AT3G02070"/>
</dbReference>
<dbReference type="Gramene" id="AT3G02070.2">
    <molecule id="Q9SGA5-1"/>
    <property type="protein sequence ID" value="AT3G02070.2"/>
    <property type="gene ID" value="AT3G02070"/>
</dbReference>
<dbReference type="KEGG" id="ath:AT3G02070"/>
<dbReference type="Araport" id="AT3G02070"/>
<dbReference type="TAIR" id="AT3G02070"/>
<dbReference type="eggNOG" id="KOG2605">
    <property type="taxonomic scope" value="Eukaryota"/>
</dbReference>
<dbReference type="HOGENOM" id="CLU_044001_2_1_1"/>
<dbReference type="InParanoid" id="Q9SGA5"/>
<dbReference type="OMA" id="DCMIAVV"/>
<dbReference type="OrthoDB" id="415023at2759"/>
<dbReference type="PhylomeDB" id="Q9SGA5"/>
<dbReference type="PRO" id="PR:Q9SGA5"/>
<dbReference type="Proteomes" id="UP000006548">
    <property type="component" value="Chromosome 3"/>
</dbReference>
<dbReference type="ExpressionAtlas" id="Q9SGA5">
    <property type="expression patterns" value="baseline and differential"/>
</dbReference>
<dbReference type="GO" id="GO:0004843">
    <property type="term" value="F:cysteine-type deubiquitinase activity"/>
    <property type="evidence" value="ECO:0007669"/>
    <property type="project" value="UniProtKB-EC"/>
</dbReference>
<dbReference type="CDD" id="cd22751">
    <property type="entry name" value="OTU_plant_OTU9-like"/>
    <property type="match status" value="1"/>
</dbReference>
<dbReference type="FunFam" id="3.90.70.80:FF:000001">
    <property type="entry name" value="OTU domain-containing protein"/>
    <property type="match status" value="1"/>
</dbReference>
<dbReference type="Gene3D" id="3.90.70.80">
    <property type="match status" value="1"/>
</dbReference>
<dbReference type="InterPro" id="IPR003323">
    <property type="entry name" value="OTU_dom"/>
</dbReference>
<dbReference type="InterPro" id="IPR038765">
    <property type="entry name" value="Papain-like_cys_pep_sf"/>
</dbReference>
<dbReference type="InterPro" id="IPR050704">
    <property type="entry name" value="Peptidase_C85-like"/>
</dbReference>
<dbReference type="PANTHER" id="PTHR12419">
    <property type="entry name" value="OTU DOMAIN CONTAINING PROTEIN"/>
    <property type="match status" value="1"/>
</dbReference>
<dbReference type="PANTHER" id="PTHR12419:SF3">
    <property type="entry name" value="OVARIAN TUMOR DOMAIN-CONTAINING DEUBIQUITINATING ENZYME 12"/>
    <property type="match status" value="1"/>
</dbReference>
<dbReference type="Pfam" id="PF02338">
    <property type="entry name" value="OTU"/>
    <property type="match status" value="1"/>
</dbReference>
<dbReference type="SUPFAM" id="SSF54001">
    <property type="entry name" value="Cysteine proteinases"/>
    <property type="match status" value="1"/>
</dbReference>
<dbReference type="PROSITE" id="PS50802">
    <property type="entry name" value="OTU"/>
    <property type="match status" value="1"/>
</dbReference>
<reference key="1">
    <citation type="journal article" date="2014" name="Front. Plant Sci.">
        <title>Distinct phylogenetic relationships and biochemical properties of Arabidopsis ovarian tumor-related deubiquitinases support their functional differentiation.</title>
        <authorList>
            <person name="Radjacommare R."/>
            <person name="Usharani R."/>
            <person name="Kuo C.-H."/>
            <person name="Fu H."/>
        </authorList>
    </citation>
    <scope>NUCLEOTIDE SEQUENCE [MRNA] (ISOFORM 1)</scope>
    <scope>FUNCTION</scope>
    <scope>GENE FAMILY</scope>
    <scope>NOMENCLATURE</scope>
</reference>
<reference key="2">
    <citation type="journal article" date="2000" name="Nature">
        <title>Sequence and analysis of chromosome 3 of the plant Arabidopsis thaliana.</title>
        <authorList>
            <person name="Salanoubat M."/>
            <person name="Lemcke K."/>
            <person name="Rieger M."/>
            <person name="Ansorge W."/>
            <person name="Unseld M."/>
            <person name="Fartmann B."/>
            <person name="Valle G."/>
            <person name="Bloecker H."/>
            <person name="Perez-Alonso M."/>
            <person name="Obermaier B."/>
            <person name="Delseny M."/>
            <person name="Boutry M."/>
            <person name="Grivell L.A."/>
            <person name="Mache R."/>
            <person name="Puigdomenech P."/>
            <person name="De Simone V."/>
            <person name="Choisne N."/>
            <person name="Artiguenave F."/>
            <person name="Robert C."/>
            <person name="Brottier P."/>
            <person name="Wincker P."/>
            <person name="Cattolico L."/>
            <person name="Weissenbach J."/>
            <person name="Saurin W."/>
            <person name="Quetier F."/>
            <person name="Schaefer M."/>
            <person name="Mueller-Auer S."/>
            <person name="Gabel C."/>
            <person name="Fuchs M."/>
            <person name="Benes V."/>
            <person name="Wurmbach E."/>
            <person name="Drzonek H."/>
            <person name="Erfle H."/>
            <person name="Jordan N."/>
            <person name="Bangert S."/>
            <person name="Wiedelmann R."/>
            <person name="Kranz H."/>
            <person name="Voss H."/>
            <person name="Holland R."/>
            <person name="Brandt P."/>
            <person name="Nyakatura G."/>
            <person name="Vezzi A."/>
            <person name="D'Angelo M."/>
            <person name="Pallavicini A."/>
            <person name="Toppo S."/>
            <person name="Simionati B."/>
            <person name="Conrad A."/>
            <person name="Hornischer K."/>
            <person name="Kauer G."/>
            <person name="Loehnert T.-H."/>
            <person name="Nordsiek G."/>
            <person name="Reichelt J."/>
            <person name="Scharfe M."/>
            <person name="Schoen O."/>
            <person name="Bargues M."/>
            <person name="Terol J."/>
            <person name="Climent J."/>
            <person name="Navarro P."/>
            <person name="Collado C."/>
            <person name="Perez-Perez A."/>
            <person name="Ottenwaelder B."/>
            <person name="Duchemin D."/>
            <person name="Cooke R."/>
            <person name="Laudie M."/>
            <person name="Berger-Llauro C."/>
            <person name="Purnelle B."/>
            <person name="Masuy D."/>
            <person name="de Haan M."/>
            <person name="Maarse A.C."/>
            <person name="Alcaraz J.-P."/>
            <person name="Cottet A."/>
            <person name="Casacuberta E."/>
            <person name="Monfort A."/>
            <person name="Argiriou A."/>
            <person name="Flores M."/>
            <person name="Liguori R."/>
            <person name="Vitale D."/>
            <person name="Mannhaupt G."/>
            <person name="Haase D."/>
            <person name="Schoof H."/>
            <person name="Rudd S."/>
            <person name="Zaccaria P."/>
            <person name="Mewes H.-W."/>
            <person name="Mayer K.F.X."/>
            <person name="Kaul S."/>
            <person name="Town C.D."/>
            <person name="Koo H.L."/>
            <person name="Tallon L.J."/>
            <person name="Jenkins J."/>
            <person name="Rooney T."/>
            <person name="Rizzo M."/>
            <person name="Walts A."/>
            <person name="Utterback T."/>
            <person name="Fujii C.Y."/>
            <person name="Shea T.P."/>
            <person name="Creasy T.H."/>
            <person name="Haas B."/>
            <person name="Maiti R."/>
            <person name="Wu D."/>
            <person name="Peterson J."/>
            <person name="Van Aken S."/>
            <person name="Pai G."/>
            <person name="Militscher J."/>
            <person name="Sellers P."/>
            <person name="Gill J.E."/>
            <person name="Feldblyum T.V."/>
            <person name="Preuss D."/>
            <person name="Lin X."/>
            <person name="Nierman W.C."/>
            <person name="Salzberg S.L."/>
            <person name="White O."/>
            <person name="Venter J.C."/>
            <person name="Fraser C.M."/>
            <person name="Kaneko T."/>
            <person name="Nakamura Y."/>
            <person name="Sato S."/>
            <person name="Kato T."/>
            <person name="Asamizu E."/>
            <person name="Sasamoto S."/>
            <person name="Kimura T."/>
            <person name="Idesawa K."/>
            <person name="Kawashima K."/>
            <person name="Kishida Y."/>
            <person name="Kiyokawa C."/>
            <person name="Kohara M."/>
            <person name="Matsumoto M."/>
            <person name="Matsuno A."/>
            <person name="Muraki A."/>
            <person name="Nakayama S."/>
            <person name="Nakazaki N."/>
            <person name="Shinpo S."/>
            <person name="Takeuchi C."/>
            <person name="Wada T."/>
            <person name="Watanabe A."/>
            <person name="Yamada M."/>
            <person name="Yasuda M."/>
            <person name="Tabata S."/>
        </authorList>
    </citation>
    <scope>NUCLEOTIDE SEQUENCE [LARGE SCALE GENOMIC DNA]</scope>
    <source>
        <strain>cv. Columbia</strain>
    </source>
</reference>
<reference key="3">
    <citation type="journal article" date="2017" name="Plant J.">
        <title>Araport11: a complete reannotation of the Arabidopsis thaliana reference genome.</title>
        <authorList>
            <person name="Cheng C.Y."/>
            <person name="Krishnakumar V."/>
            <person name="Chan A.P."/>
            <person name="Thibaud-Nissen F."/>
            <person name="Schobel S."/>
            <person name="Town C.D."/>
        </authorList>
    </citation>
    <scope>GENOME REANNOTATION</scope>
    <source>
        <strain>cv. Columbia</strain>
    </source>
</reference>
<reference key="4">
    <citation type="submission" date="2004-03" db="EMBL/GenBank/DDBJ databases">
        <title>Arabidopsis ORF clones.</title>
        <authorList>
            <person name="Cheuk R.F."/>
            <person name="Chen H."/>
            <person name="Kim C.J."/>
            <person name="Shinn P."/>
            <person name="Ecker J.R."/>
        </authorList>
    </citation>
    <scope>NUCLEOTIDE SEQUENCE [LARGE SCALE MRNA] (ISOFORM 1)</scope>
    <source>
        <strain>cv. Columbia</strain>
    </source>
</reference>
<reference key="5">
    <citation type="submission" date="2006-07" db="EMBL/GenBank/DDBJ databases">
        <title>Large-scale analysis of RIKEN Arabidopsis full-length (RAFL) cDNAs.</title>
        <authorList>
            <person name="Totoki Y."/>
            <person name="Seki M."/>
            <person name="Ishida J."/>
            <person name="Nakajima M."/>
            <person name="Enju A."/>
            <person name="Kamiya A."/>
            <person name="Narusaka M."/>
            <person name="Shin-i T."/>
            <person name="Nakagawa M."/>
            <person name="Sakamoto N."/>
            <person name="Oishi K."/>
            <person name="Kohara Y."/>
            <person name="Kobayashi M."/>
            <person name="Toyoda A."/>
            <person name="Sakaki Y."/>
            <person name="Sakurai T."/>
            <person name="Iida K."/>
            <person name="Akiyama K."/>
            <person name="Satou M."/>
            <person name="Toyoda T."/>
            <person name="Konagaya A."/>
            <person name="Carninci P."/>
            <person name="Kawai J."/>
            <person name="Hayashizaki Y."/>
            <person name="Shinozaki K."/>
        </authorList>
    </citation>
    <scope>NUCLEOTIDE SEQUENCE [LARGE SCALE MRNA] (ISOFORM 2)</scope>
    <source>
        <strain>cv. Columbia</strain>
    </source>
</reference>
<reference key="6">
    <citation type="journal article" date="2009" name="DNA Res.">
        <title>Analysis of multiple occurrences of alternative splicing events in Arabidopsis thaliana using novel sequenced full-length cDNAs.</title>
        <authorList>
            <person name="Iida K."/>
            <person name="Fukami-Kobayashi K."/>
            <person name="Toyoda A."/>
            <person name="Sakaki Y."/>
            <person name="Kobayashi M."/>
            <person name="Seki M."/>
            <person name="Shinozaki K."/>
        </authorList>
    </citation>
    <scope>NUCLEOTIDE SEQUENCE [LARGE SCALE MRNA] (ISOFORM 1)</scope>
    <source>
        <strain>cv. Columbia</strain>
        <tissue>Rosette leaf</tissue>
    </source>
</reference>
<keyword id="KW-0025">Alternative splicing</keyword>
<keyword id="KW-0378">Hydrolase</keyword>
<keyword id="KW-1185">Reference proteome</keyword>
<keyword id="KW-0833">Ubl conjugation pathway</keyword>
<name>OTU12_ARATH</name>
<proteinExistence type="evidence at transcript level"/>